<proteinExistence type="evidence at transcript level"/>
<organism>
    <name type="scientific">Bos taurus</name>
    <name type="common">Bovine</name>
    <dbReference type="NCBI Taxonomy" id="9913"/>
    <lineage>
        <taxon>Eukaryota</taxon>
        <taxon>Metazoa</taxon>
        <taxon>Chordata</taxon>
        <taxon>Craniata</taxon>
        <taxon>Vertebrata</taxon>
        <taxon>Euteleostomi</taxon>
        <taxon>Mammalia</taxon>
        <taxon>Eutheria</taxon>
        <taxon>Laurasiatheria</taxon>
        <taxon>Artiodactyla</taxon>
        <taxon>Ruminantia</taxon>
        <taxon>Pecora</taxon>
        <taxon>Bovidae</taxon>
        <taxon>Bovinae</taxon>
        <taxon>Bos</taxon>
    </lineage>
</organism>
<reference key="1">
    <citation type="journal article" date="2003" name="Proc. Natl. Acad. Sci. U.S.A.">
        <title>Rab27b is associated with fusiform vesicles and may be involved in targeting uroplakins to urothelial apical membranes.</title>
        <authorList>
            <person name="Chen Y."/>
            <person name="Guo X."/>
            <person name="Deng F.M."/>
            <person name="Liang F.X."/>
            <person name="Sun W."/>
            <person name="Ren M."/>
            <person name="Izumi T."/>
            <person name="Sabatini D.D."/>
            <person name="Sun T.T."/>
            <person name="Kreibich G."/>
        </authorList>
    </citation>
    <scope>NUCLEOTIDE SEQUENCE [MRNA]</scope>
    <scope>FUNCTION</scope>
    <scope>TISSUE SPECIFICITY</scope>
</reference>
<gene>
    <name type="primary">RAB27B</name>
</gene>
<sequence length="218" mass="24612">MTDGDYDYLIKLLALGDSGVGKTTFLYRYTDNKFNPKFITTVGIDFREKRVAYNTQGPNGPTGKAFKVHLQLWDTAGQERFRSLTTAFFRDAMGFLLMFDLTSQQSFLNVRNWMSQLQANAYCENPDIVLIGNKADLPDQREVNERQARDLAEKYSIPYFETSAATGQNVEKAVETLLDLIMKRMEQCVEKTHIPDTVNGSSSGKLDGEKSAEKKCAC</sequence>
<evidence type="ECO:0000250" key="1"/>
<evidence type="ECO:0000250" key="2">
    <source>
        <dbReference type="UniProtKB" id="O00194"/>
    </source>
</evidence>
<evidence type="ECO:0000250" key="3">
    <source>
        <dbReference type="UniProtKB" id="Q99P58"/>
    </source>
</evidence>
<evidence type="ECO:0000250" key="4">
    <source>
        <dbReference type="UniProtKB" id="Q99P74"/>
    </source>
</evidence>
<evidence type="ECO:0000256" key="5">
    <source>
        <dbReference type="SAM" id="MobiDB-lite"/>
    </source>
</evidence>
<evidence type="ECO:0000269" key="6">
    <source>
    </source>
</evidence>
<evidence type="ECO:0000305" key="7"/>
<name>RB27B_BOVIN</name>
<feature type="initiator methionine" description="Removed" evidence="2">
    <location>
        <position position="1"/>
    </location>
</feature>
<feature type="chain" id="PRO_0000244430" description="Ras-related protein Rab-27B">
    <location>
        <begin position="2"/>
        <end position="218"/>
    </location>
</feature>
<feature type="region of interest" description="Disordered" evidence="5">
    <location>
        <begin position="193"/>
        <end position="218"/>
    </location>
</feature>
<feature type="short sequence motif" description="Effector region" evidence="1">
    <location>
        <begin position="38"/>
        <end position="46"/>
    </location>
</feature>
<feature type="compositionally biased region" description="Basic and acidic residues" evidence="5">
    <location>
        <begin position="206"/>
        <end position="218"/>
    </location>
</feature>
<feature type="binding site" evidence="1">
    <location>
        <begin position="16"/>
        <end position="24"/>
    </location>
    <ligand>
        <name>GTP</name>
        <dbReference type="ChEBI" id="CHEBI:37565"/>
    </ligand>
</feature>
<feature type="binding site" evidence="1">
    <location>
        <begin position="74"/>
        <end position="78"/>
    </location>
    <ligand>
        <name>GTP</name>
        <dbReference type="ChEBI" id="CHEBI:37565"/>
    </ligand>
</feature>
<feature type="binding site" evidence="1">
    <location>
        <begin position="133"/>
        <end position="136"/>
    </location>
    <ligand>
        <name>GTP</name>
        <dbReference type="ChEBI" id="CHEBI:37565"/>
    </ligand>
</feature>
<feature type="binding site" evidence="1">
    <location>
        <begin position="163"/>
        <end position="165"/>
    </location>
    <ligand>
        <name>GTP</name>
        <dbReference type="ChEBI" id="CHEBI:37565"/>
    </ligand>
</feature>
<feature type="modified residue" description="N-acetylthreonine" evidence="2">
    <location>
        <position position="2"/>
    </location>
</feature>
<feature type="modified residue" description="Cysteine methyl ester" evidence="1">
    <location>
        <position position="218"/>
    </location>
</feature>
<feature type="lipid moiety-binding region" description="S-geranylgeranyl cysteine" evidence="1">
    <location>
        <position position="216"/>
    </location>
</feature>
<feature type="lipid moiety-binding region" description="S-geranylgeranyl cysteine" evidence="1">
    <location>
        <position position="218"/>
    </location>
</feature>
<feature type="disulfide bond" evidence="1">
    <location>
        <begin position="123"/>
        <end position="188"/>
    </location>
</feature>
<keyword id="KW-0007">Acetylation</keyword>
<keyword id="KW-1015">Disulfide bond</keyword>
<keyword id="KW-0967">Endosome</keyword>
<keyword id="KW-0342">GTP-binding</keyword>
<keyword id="KW-0378">Hydrolase</keyword>
<keyword id="KW-0449">Lipoprotein</keyword>
<keyword id="KW-0472">Membrane</keyword>
<keyword id="KW-0488">Methylation</keyword>
<keyword id="KW-0547">Nucleotide-binding</keyword>
<keyword id="KW-0636">Prenylation</keyword>
<keyword id="KW-1185">Reference proteome</keyword>
<protein>
    <recommendedName>
        <fullName>Ras-related protein Rab-27B</fullName>
        <ecNumber evidence="2">3.6.5.2</ecNumber>
    </recommendedName>
</protein>
<dbReference type="EC" id="3.6.5.2" evidence="2"/>
<dbReference type="EMBL" id="AY010899">
    <property type="protein sequence ID" value="AAG45503.1"/>
    <property type="molecule type" value="mRNA"/>
</dbReference>
<dbReference type="RefSeq" id="NP_777163.1">
    <property type="nucleotide sequence ID" value="NM_174738.2"/>
</dbReference>
<dbReference type="SMR" id="Q8HZJ5"/>
<dbReference type="FunCoup" id="Q8HZJ5">
    <property type="interactions" value="346"/>
</dbReference>
<dbReference type="STRING" id="9913.ENSBTAP00000070586"/>
<dbReference type="PaxDb" id="9913-ENSBTAP00000003613"/>
<dbReference type="Ensembl" id="ENSBTAT00000067536.2">
    <property type="protein sequence ID" value="ENSBTAP00000064075.1"/>
    <property type="gene ID" value="ENSBTAG00000002788.6"/>
</dbReference>
<dbReference type="GeneID" id="282858"/>
<dbReference type="KEGG" id="bta:282858"/>
<dbReference type="CTD" id="5874"/>
<dbReference type="VEuPathDB" id="HostDB:ENSBTAG00000002788"/>
<dbReference type="VGNC" id="VGNC:33634">
    <property type="gene designation" value="RAB27B"/>
</dbReference>
<dbReference type="eggNOG" id="KOG0081">
    <property type="taxonomic scope" value="Eukaryota"/>
</dbReference>
<dbReference type="GeneTree" id="ENSGT00940000157449"/>
<dbReference type="HOGENOM" id="CLU_041217_10_1_1"/>
<dbReference type="InParanoid" id="Q8HZJ5"/>
<dbReference type="OMA" id="IEKKCAC"/>
<dbReference type="OrthoDB" id="9989112at2759"/>
<dbReference type="TreeFam" id="TF312895"/>
<dbReference type="Reactome" id="R-BTA-114608">
    <property type="pathway name" value="Platelet degranulation"/>
</dbReference>
<dbReference type="Reactome" id="R-BTA-8873719">
    <property type="pathway name" value="RAB geranylgeranylation"/>
</dbReference>
<dbReference type="Reactome" id="R-BTA-8876198">
    <property type="pathway name" value="RAB GEFs exchange GTP for GDP on RABs"/>
</dbReference>
<dbReference type="Proteomes" id="UP000009136">
    <property type="component" value="Chromosome 24"/>
</dbReference>
<dbReference type="Bgee" id="ENSBTAG00000002788">
    <property type="expression patterns" value="Expressed in semen and 101 other cell types or tissues"/>
</dbReference>
<dbReference type="GO" id="GO:0016324">
    <property type="term" value="C:apical plasma membrane"/>
    <property type="evidence" value="ECO:0000318"/>
    <property type="project" value="GO_Central"/>
</dbReference>
<dbReference type="GO" id="GO:1904115">
    <property type="term" value="C:axon cytoplasm"/>
    <property type="evidence" value="ECO:0007669"/>
    <property type="project" value="GOC"/>
</dbReference>
<dbReference type="GO" id="GO:0070382">
    <property type="term" value="C:exocytic vesicle"/>
    <property type="evidence" value="ECO:0000318"/>
    <property type="project" value="GO_Central"/>
</dbReference>
<dbReference type="GO" id="GO:0005794">
    <property type="term" value="C:Golgi apparatus"/>
    <property type="evidence" value="ECO:0000318"/>
    <property type="project" value="GO_Central"/>
</dbReference>
<dbReference type="GO" id="GO:0005770">
    <property type="term" value="C:late endosome"/>
    <property type="evidence" value="ECO:0000250"/>
    <property type="project" value="UniProtKB"/>
</dbReference>
<dbReference type="GO" id="GO:0042470">
    <property type="term" value="C:melanosome"/>
    <property type="evidence" value="ECO:0000318"/>
    <property type="project" value="GO_Central"/>
</dbReference>
<dbReference type="GO" id="GO:0030141">
    <property type="term" value="C:secretory granule"/>
    <property type="evidence" value="ECO:0000318"/>
    <property type="project" value="GO_Central"/>
</dbReference>
<dbReference type="GO" id="GO:0003925">
    <property type="term" value="F:G protein activity"/>
    <property type="evidence" value="ECO:0007669"/>
    <property type="project" value="UniProtKB-EC"/>
</dbReference>
<dbReference type="GO" id="GO:0019003">
    <property type="term" value="F:GDP binding"/>
    <property type="evidence" value="ECO:0000250"/>
    <property type="project" value="UniProtKB"/>
</dbReference>
<dbReference type="GO" id="GO:0005525">
    <property type="term" value="F:GTP binding"/>
    <property type="evidence" value="ECO:0000250"/>
    <property type="project" value="UniProtKB"/>
</dbReference>
<dbReference type="GO" id="GO:0003924">
    <property type="term" value="F:GTPase activity"/>
    <property type="evidence" value="ECO:0000250"/>
    <property type="project" value="UniProtKB"/>
</dbReference>
<dbReference type="GO" id="GO:0099641">
    <property type="term" value="P:anterograde axonal protein transport"/>
    <property type="evidence" value="ECO:0000250"/>
    <property type="project" value="UniProtKB"/>
</dbReference>
<dbReference type="GO" id="GO:0006887">
    <property type="term" value="P:exocytosis"/>
    <property type="evidence" value="ECO:0000318"/>
    <property type="project" value="GO_Central"/>
</dbReference>
<dbReference type="GO" id="GO:0045921">
    <property type="term" value="P:positive regulation of exocytosis"/>
    <property type="evidence" value="ECO:0000318"/>
    <property type="project" value="GO_Central"/>
</dbReference>
<dbReference type="CDD" id="cd04127">
    <property type="entry name" value="Rab27A"/>
    <property type="match status" value="1"/>
</dbReference>
<dbReference type="FunFam" id="3.40.50.300:FF:000402">
    <property type="entry name" value="Ras-related protein Rab-27A"/>
    <property type="match status" value="1"/>
</dbReference>
<dbReference type="Gene3D" id="3.40.50.300">
    <property type="entry name" value="P-loop containing nucleotide triphosphate hydrolases"/>
    <property type="match status" value="1"/>
</dbReference>
<dbReference type="InterPro" id="IPR027417">
    <property type="entry name" value="P-loop_NTPase"/>
</dbReference>
<dbReference type="InterPro" id="IPR041837">
    <property type="entry name" value="Rab27a/b"/>
</dbReference>
<dbReference type="InterPro" id="IPR005225">
    <property type="entry name" value="Small_GTP-bd"/>
</dbReference>
<dbReference type="InterPro" id="IPR001806">
    <property type="entry name" value="Small_GTPase"/>
</dbReference>
<dbReference type="InterPro" id="IPR050305">
    <property type="entry name" value="Small_GTPase_Rab"/>
</dbReference>
<dbReference type="NCBIfam" id="TIGR00231">
    <property type="entry name" value="small_GTP"/>
    <property type="match status" value="1"/>
</dbReference>
<dbReference type="PANTHER" id="PTHR47980">
    <property type="entry name" value="LD44762P"/>
    <property type="match status" value="1"/>
</dbReference>
<dbReference type="Pfam" id="PF00071">
    <property type="entry name" value="Ras"/>
    <property type="match status" value="1"/>
</dbReference>
<dbReference type="PRINTS" id="PR00449">
    <property type="entry name" value="RASTRNSFRMNG"/>
</dbReference>
<dbReference type="SMART" id="SM00175">
    <property type="entry name" value="RAB"/>
    <property type="match status" value="1"/>
</dbReference>
<dbReference type="SMART" id="SM00176">
    <property type="entry name" value="RAN"/>
    <property type="match status" value="1"/>
</dbReference>
<dbReference type="SMART" id="SM00173">
    <property type="entry name" value="RAS"/>
    <property type="match status" value="1"/>
</dbReference>
<dbReference type="SMART" id="SM00174">
    <property type="entry name" value="RHO"/>
    <property type="match status" value="1"/>
</dbReference>
<dbReference type="SUPFAM" id="SSF52540">
    <property type="entry name" value="P-loop containing nucleoside triphosphate hydrolases"/>
    <property type="match status" value="1"/>
</dbReference>
<dbReference type="PROSITE" id="PS51419">
    <property type="entry name" value="RAB"/>
    <property type="match status" value="1"/>
</dbReference>
<comment type="function">
    <text evidence="2 4 6">Small GTPase which cycles between active GTP-bound and inactive GDP-bound states. In its active state, binds to a variety of effector proteins to regulate homeostasis of late endocytic pathway, including endosomal positioning, maturation and secretion (By similarity). Plays a role in NTRK2/TRKB axonal anterograde transport by facilitating the association of NTRK2/TRKB with KLC1 (By similarity). May be involved in targeting uroplakins to urothelial apical membranes (PubMed:14625374).</text>
</comment>
<comment type="catalytic activity">
    <reaction evidence="2">
        <text>GTP + H2O = GDP + phosphate + H(+)</text>
        <dbReference type="Rhea" id="RHEA:19669"/>
        <dbReference type="ChEBI" id="CHEBI:15377"/>
        <dbReference type="ChEBI" id="CHEBI:15378"/>
        <dbReference type="ChEBI" id="CHEBI:37565"/>
        <dbReference type="ChEBI" id="CHEBI:43474"/>
        <dbReference type="ChEBI" id="CHEBI:58189"/>
        <dbReference type="EC" id="3.6.5.2"/>
    </reaction>
    <physiologicalReaction direction="left-to-right" evidence="2">
        <dbReference type="Rhea" id="RHEA:19670"/>
    </physiologicalReaction>
</comment>
<comment type="activity regulation">
    <text evidence="2">Regulated by guanine nucleotide exchange factors (GEFs) which promote the exchange of bound GDP for free GTP, GTPase activating proteins (GAPs) which increase the GTP hydrolysis activity, and GDP dissociation inhibitors which inhibit the dissociation of the nucleotide from the GTPase. Activated by GEFs such as DENND10.</text>
</comment>
<comment type="subunit">
    <text evidence="2 3">Interacts with SYTL2, SYTL4, MYRIP and MLPH. Interacts with RPH3A and RPH3A (By similarity). Interacts (GDP-bound form preferentially) with DENND10 (By similarity).</text>
</comment>
<comment type="subcellular location">
    <subcellularLocation>
        <location evidence="2">Membrane</location>
        <topology evidence="2">Lipid-anchor</topology>
    </subcellularLocation>
    <subcellularLocation>
        <location evidence="2">Late endosome</location>
    </subcellularLocation>
</comment>
<comment type="tissue specificity">
    <text evidence="6">Expressed at an extraordinary high level (0.1% of total protein) in urothelium.</text>
</comment>
<comment type="similarity">
    <text evidence="7">Belongs to the small GTPase superfamily. Rab family.</text>
</comment>
<accession>Q8HZJ5</accession>